<reference evidence="4" key="1">
    <citation type="submission" date="2000-11" db="EMBL/GenBank/DDBJ databases">
        <title>Cloning, expression and purification of the acidic ribosomal protein from Candida albicans.</title>
        <authorList>
            <person name="Abramczyk D."/>
            <person name="Tchorzewski M."/>
            <person name="Grankowski N."/>
        </authorList>
    </citation>
    <scope>NUCLEOTIDE SEQUENCE [GENOMIC DNA]</scope>
    <source>
        <strain>ATCC 10231 / CBS 6431 / CIP 48.72 / DSM 1386 / NBRC 1594</strain>
    </source>
</reference>
<reference key="2">
    <citation type="journal article" date="2003" name="Yeast">
        <title>Non-AUG translation initiation of mRNA encoding acidic ribosomal P2A protein in Candida albicans.</title>
        <authorList>
            <person name="Abramczyk D."/>
            <person name="Tchorzewski M."/>
            <person name="Grankowski N."/>
        </authorList>
    </citation>
    <scope>PROTEIN SEQUENCE OF 1-20</scope>
    <source>
        <strain>ATCC 10231 / CBS 6431 / CIP 48.72 / DSM 1386 / NBRC 1594</strain>
    </source>
</reference>
<accession>Q9HFQ5</accession>
<organism evidence="5">
    <name type="scientific">Candida albicans</name>
    <name type="common">Yeast</name>
    <dbReference type="NCBI Taxonomy" id="5476"/>
    <lineage>
        <taxon>Eukaryota</taxon>
        <taxon>Fungi</taxon>
        <taxon>Dikarya</taxon>
        <taxon>Ascomycota</taxon>
        <taxon>Saccharomycotina</taxon>
        <taxon>Pichiomycetes</taxon>
        <taxon>Debaryomycetaceae</taxon>
        <taxon>Candida/Lodderomyces clade</taxon>
        <taxon>Candida</taxon>
    </lineage>
</organism>
<gene>
    <name type="primary">RPP2A</name>
</gene>
<comment type="function">
    <text evidence="2">Plays an important role in the elongation step of protein synthesis.</text>
</comment>
<comment type="similarity">
    <text evidence="4">Belongs to the eukaryotic ribosomal protein P1/P2 family.</text>
</comment>
<keyword id="KW-0903">Direct protein sequencing</keyword>
<keyword id="KW-0597">Phosphoprotein</keyword>
<keyword id="KW-0687">Ribonucleoprotein</keyword>
<keyword id="KW-0689">Ribosomal protein</keyword>
<dbReference type="EMBL" id="AF317661">
    <property type="protein sequence ID" value="AAG33242.1"/>
    <property type="molecule type" value="Genomic_DNA"/>
</dbReference>
<dbReference type="SMR" id="Q9HFQ5"/>
<dbReference type="VEuPathDB" id="FungiDB:CR_08360C_A"/>
<dbReference type="GO" id="GO:0022625">
    <property type="term" value="C:cytosolic large ribosomal subunit"/>
    <property type="evidence" value="ECO:0007669"/>
    <property type="project" value="InterPro"/>
</dbReference>
<dbReference type="GO" id="GO:0005840">
    <property type="term" value="C:ribosome"/>
    <property type="evidence" value="ECO:0000314"/>
    <property type="project" value="CAFA"/>
</dbReference>
<dbReference type="GO" id="GO:0042802">
    <property type="term" value="F:identical protein binding"/>
    <property type="evidence" value="ECO:0000314"/>
    <property type="project" value="CAFA"/>
</dbReference>
<dbReference type="GO" id="GO:0003735">
    <property type="term" value="F:structural constituent of ribosome"/>
    <property type="evidence" value="ECO:0000314"/>
    <property type="project" value="CAFA"/>
</dbReference>
<dbReference type="GO" id="GO:0002182">
    <property type="term" value="P:cytoplasmic translational elongation"/>
    <property type="evidence" value="ECO:0007669"/>
    <property type="project" value="InterPro"/>
</dbReference>
<dbReference type="GO" id="GO:0051291">
    <property type="term" value="P:protein heterooligomerization"/>
    <property type="evidence" value="ECO:0000314"/>
    <property type="project" value="CAFA"/>
</dbReference>
<dbReference type="GO" id="GO:0051260">
    <property type="term" value="P:protein homooligomerization"/>
    <property type="evidence" value="ECO:0000314"/>
    <property type="project" value="CAFA"/>
</dbReference>
<dbReference type="CDD" id="cd05833">
    <property type="entry name" value="Ribosomal_P2"/>
    <property type="match status" value="1"/>
</dbReference>
<dbReference type="FunFam" id="1.10.10.1410:FF:000002">
    <property type="entry name" value="60S acidic ribosomal protein P2"/>
    <property type="match status" value="1"/>
</dbReference>
<dbReference type="Gene3D" id="1.10.10.1410">
    <property type="match status" value="1"/>
</dbReference>
<dbReference type="HAMAP" id="MF_01478">
    <property type="entry name" value="Ribosomal_L12_arch"/>
    <property type="match status" value="1"/>
</dbReference>
<dbReference type="InterPro" id="IPR038716">
    <property type="entry name" value="P1/P2_N_sf"/>
</dbReference>
<dbReference type="InterPro" id="IPR027534">
    <property type="entry name" value="Ribosomal_P1/P2"/>
</dbReference>
<dbReference type="InterPro" id="IPR044076">
    <property type="entry name" value="Ribosomal_P2"/>
</dbReference>
<dbReference type="PANTHER" id="PTHR21141">
    <property type="entry name" value="60S ACIDIC RIBOSOMAL PROTEIN FAMILY MEMBER"/>
    <property type="match status" value="1"/>
</dbReference>
<dbReference type="PANTHER" id="PTHR21141:SF103">
    <property type="entry name" value="LARGE RIBOSOMAL SUBUNIT PROTEIN P2A"/>
    <property type="match status" value="1"/>
</dbReference>
<dbReference type="Pfam" id="PF00428">
    <property type="entry name" value="Ribosomal_60s"/>
    <property type="match status" value="1"/>
</dbReference>
<evidence type="ECO:0000250" key="1"/>
<evidence type="ECO:0000250" key="2">
    <source>
        <dbReference type="UniProtKB" id="P17478"/>
    </source>
</evidence>
<evidence type="ECO:0000256" key="3">
    <source>
        <dbReference type="SAM" id="MobiDB-lite"/>
    </source>
</evidence>
<evidence type="ECO:0000305" key="4"/>
<evidence type="ECO:0000312" key="5">
    <source>
        <dbReference type="EMBL" id="AAG33242.1"/>
    </source>
</evidence>
<feature type="chain" id="PRO_0000157674" description="Large ribosomal subunit protein P2A">
    <location>
        <begin position="1"/>
        <end position="108"/>
    </location>
</feature>
<feature type="region of interest" description="Disordered" evidence="3">
    <location>
        <begin position="62"/>
        <end position="108"/>
    </location>
</feature>
<feature type="compositionally biased region" description="Low complexity" evidence="3">
    <location>
        <begin position="68"/>
        <end position="84"/>
    </location>
</feature>
<feature type="compositionally biased region" description="Acidic residues" evidence="3">
    <location>
        <begin position="85"/>
        <end position="102"/>
    </location>
</feature>
<feature type="modified residue" description="Phosphoserine" evidence="1">
    <location>
        <position position="98"/>
    </location>
</feature>
<sequence>MKYLAAYLLLVNAGNATPSAADVKAVLSAADIEVEEEKVEKLISESDGKNVEELIAEGNEKLSSVPSGAPAAAAGGASAAAGGEATEEAAEEEAAEESDDDMSFGLFD</sequence>
<proteinExistence type="evidence at protein level"/>
<name>RLA2_CANAX</name>
<protein>
    <recommendedName>
        <fullName evidence="4">Large ribosomal subunit protein P2A</fullName>
    </recommendedName>
    <alternativeName>
        <fullName>60S acidic ribosomal protein P2-A</fullName>
        <shortName>CaRP2A</shortName>
    </alternativeName>
</protein>